<name>SPC24_HUMAN</name>
<protein>
    <recommendedName>
        <fullName>Kinetochore protein Spc24</fullName>
        <shortName>hSpc24</shortName>
    </recommendedName>
</protein>
<proteinExistence type="evidence at protein level"/>
<comment type="function">
    <text evidence="3 7">Acts as a component of the essential kinetochore-associated NDC80 complex, which is required for chromosome segregation and spindle checkpoint activity (PubMed:14738735). Required for kinetochore integrity and the organization of stable microtubule binding sites in the outer plate of the kinetochore (PubMed:14738735). The NDC80 complex synergistically enhances the affinity of the SKA1 complex for microtubules and may allow the NDC80 complex to track depolymerizing microtubules (PubMed:23085020).</text>
</comment>
<comment type="subunit">
    <text evidence="2">Component of the NDC80 complex, which consists of NDC80/HEC1, CDCA1, SPBC24 and SPBC25. The NDC80 complex is formed by two subcomplexes composed of NDC80/HEC1-CDCA1 and SPBC24-SPBC25. Each subcomplex is formed by parallel interactions through the coiled-coil domains of individual subunits. Formation of a tetrameric complex is mediated by interactions between the C-terminal regions of both subunits of the NDC80/HEC1-CDCA1 subcomplex and the N-terminal regions of both subunits of the SPBC24-SPBC25 complex. The tetrameric NDC80 complex has an elongated rod-like structure with globular domains at either end.</text>
</comment>
<comment type="interaction">
    <interactant intactId="EBI-999900">
        <id>Q8NBT2</id>
    </interactant>
    <interactant intactId="EBI-999909">
        <id>Q9HBM1</id>
        <label>SPC25</label>
    </interactant>
    <organismsDiffer>false</organismsDiffer>
    <experiments>16</experiments>
</comment>
<comment type="interaction">
    <interactant intactId="EBI-999900">
        <id>Q8NBT2</id>
    </interactant>
    <interactant intactId="EBI-3921347">
        <id>P51687</id>
        <label>SUOX</label>
    </interactant>
    <organismsDiffer>false</organismsDiffer>
    <experiments>3</experiments>
</comment>
<comment type="interaction">
    <interactant intactId="EBI-999900">
        <id>Q8NBT2</id>
    </interactant>
    <interactant intactId="EBI-310886">
        <id>Q9P202</id>
        <label>WHRN</label>
    </interactant>
    <organismsDiffer>false</organismsDiffer>
    <experiments>3</experiments>
</comment>
<comment type="subcellular location">
    <subcellularLocation>
        <location evidence="3 4 5 6">Nucleus</location>
    </subcellularLocation>
    <subcellularLocation>
        <location evidence="3 4 5 6">Chromosome</location>
        <location evidence="3 4 5 6">Centromere</location>
        <location evidence="3 4 5 6">Kinetochore</location>
    </subcellularLocation>
    <text evidence="3">Localizes to kinetochores from late prophase to anaphase. Localizes specifically to the outer plate of the kinetochore.</text>
</comment>
<comment type="alternative products">
    <event type="alternative splicing"/>
    <isoform>
        <id>Q8NBT2-1</id>
        <name>1</name>
        <sequence type="displayed"/>
    </isoform>
    <isoform>
        <id>Q8NBT2-2</id>
        <name>2</name>
        <sequence type="described" ref="VSP_054243"/>
    </isoform>
</comment>
<comment type="similarity">
    <text evidence="9">Belongs to the SPC24 family.</text>
</comment>
<reference key="1">
    <citation type="journal article" date="2004" name="Curr. Biol.">
        <title>The vertebrate Ndc80 complex contains Spc24 and Spc25 homologs, which are required to establish and maintain kinetochore-microtubule attachment.</title>
        <authorList>
            <person name="McCleland M.L."/>
            <person name="Kallio M.J."/>
            <person name="Barrett-Wilt G.A."/>
            <person name="Kestner C.A."/>
            <person name="Shabanowitz J."/>
            <person name="Hunt D.F."/>
            <person name="Gorbsky G.J."/>
            <person name="Stukenberg P.T."/>
        </authorList>
    </citation>
    <scope>NUCLEOTIDE SEQUENCE [MRNA] (ISOFORM 1)</scope>
    <scope>FUNCTION</scope>
    <scope>SUBCELLULAR LOCATION</scope>
</reference>
<reference key="2">
    <citation type="journal article" date="2004" name="Nat. Genet.">
        <title>Complete sequencing and characterization of 21,243 full-length human cDNAs.</title>
        <authorList>
            <person name="Ota T."/>
            <person name="Suzuki Y."/>
            <person name="Nishikawa T."/>
            <person name="Otsuki T."/>
            <person name="Sugiyama T."/>
            <person name="Irie R."/>
            <person name="Wakamatsu A."/>
            <person name="Hayashi K."/>
            <person name="Sato H."/>
            <person name="Nagai K."/>
            <person name="Kimura K."/>
            <person name="Makita H."/>
            <person name="Sekine M."/>
            <person name="Obayashi M."/>
            <person name="Nishi T."/>
            <person name="Shibahara T."/>
            <person name="Tanaka T."/>
            <person name="Ishii S."/>
            <person name="Yamamoto J."/>
            <person name="Saito K."/>
            <person name="Kawai Y."/>
            <person name="Isono Y."/>
            <person name="Nakamura Y."/>
            <person name="Nagahari K."/>
            <person name="Murakami K."/>
            <person name="Yasuda T."/>
            <person name="Iwayanagi T."/>
            <person name="Wagatsuma M."/>
            <person name="Shiratori A."/>
            <person name="Sudo H."/>
            <person name="Hosoiri T."/>
            <person name="Kaku Y."/>
            <person name="Kodaira H."/>
            <person name="Kondo H."/>
            <person name="Sugawara M."/>
            <person name="Takahashi M."/>
            <person name="Kanda K."/>
            <person name="Yokoi T."/>
            <person name="Furuya T."/>
            <person name="Kikkawa E."/>
            <person name="Omura Y."/>
            <person name="Abe K."/>
            <person name="Kamihara K."/>
            <person name="Katsuta N."/>
            <person name="Sato K."/>
            <person name="Tanikawa M."/>
            <person name="Yamazaki M."/>
            <person name="Ninomiya K."/>
            <person name="Ishibashi T."/>
            <person name="Yamashita H."/>
            <person name="Murakawa K."/>
            <person name="Fujimori K."/>
            <person name="Tanai H."/>
            <person name="Kimata M."/>
            <person name="Watanabe M."/>
            <person name="Hiraoka S."/>
            <person name="Chiba Y."/>
            <person name="Ishida S."/>
            <person name="Ono Y."/>
            <person name="Takiguchi S."/>
            <person name="Watanabe S."/>
            <person name="Yosida M."/>
            <person name="Hotuta T."/>
            <person name="Kusano J."/>
            <person name="Kanehori K."/>
            <person name="Takahashi-Fujii A."/>
            <person name="Hara H."/>
            <person name="Tanase T.-O."/>
            <person name="Nomura Y."/>
            <person name="Togiya S."/>
            <person name="Komai F."/>
            <person name="Hara R."/>
            <person name="Takeuchi K."/>
            <person name="Arita M."/>
            <person name="Imose N."/>
            <person name="Musashino K."/>
            <person name="Yuuki H."/>
            <person name="Oshima A."/>
            <person name="Sasaki N."/>
            <person name="Aotsuka S."/>
            <person name="Yoshikawa Y."/>
            <person name="Matsunawa H."/>
            <person name="Ichihara T."/>
            <person name="Shiohata N."/>
            <person name="Sano S."/>
            <person name="Moriya S."/>
            <person name="Momiyama H."/>
            <person name="Satoh N."/>
            <person name="Takami S."/>
            <person name="Terashima Y."/>
            <person name="Suzuki O."/>
            <person name="Nakagawa S."/>
            <person name="Senoh A."/>
            <person name="Mizoguchi H."/>
            <person name="Goto Y."/>
            <person name="Shimizu F."/>
            <person name="Wakebe H."/>
            <person name="Hishigaki H."/>
            <person name="Watanabe T."/>
            <person name="Sugiyama A."/>
            <person name="Takemoto M."/>
            <person name="Kawakami B."/>
            <person name="Yamazaki M."/>
            <person name="Watanabe K."/>
            <person name="Kumagai A."/>
            <person name="Itakura S."/>
            <person name="Fukuzumi Y."/>
            <person name="Fujimori Y."/>
            <person name="Komiyama M."/>
            <person name="Tashiro H."/>
            <person name="Tanigami A."/>
            <person name="Fujiwara T."/>
            <person name="Ono T."/>
            <person name="Yamada K."/>
            <person name="Fujii Y."/>
            <person name="Ozaki K."/>
            <person name="Hirao M."/>
            <person name="Ohmori Y."/>
            <person name="Kawabata A."/>
            <person name="Hikiji T."/>
            <person name="Kobatake N."/>
            <person name="Inagaki H."/>
            <person name="Ikema Y."/>
            <person name="Okamoto S."/>
            <person name="Okitani R."/>
            <person name="Kawakami T."/>
            <person name="Noguchi S."/>
            <person name="Itoh T."/>
            <person name="Shigeta K."/>
            <person name="Senba T."/>
            <person name="Matsumura K."/>
            <person name="Nakajima Y."/>
            <person name="Mizuno T."/>
            <person name="Morinaga M."/>
            <person name="Sasaki M."/>
            <person name="Togashi T."/>
            <person name="Oyama M."/>
            <person name="Hata H."/>
            <person name="Watanabe M."/>
            <person name="Komatsu T."/>
            <person name="Mizushima-Sugano J."/>
            <person name="Satoh T."/>
            <person name="Shirai Y."/>
            <person name="Takahashi Y."/>
            <person name="Nakagawa K."/>
            <person name="Okumura K."/>
            <person name="Nagase T."/>
            <person name="Nomura N."/>
            <person name="Kikuchi H."/>
            <person name="Masuho Y."/>
            <person name="Yamashita R."/>
            <person name="Nakai K."/>
            <person name="Yada T."/>
            <person name="Nakamura Y."/>
            <person name="Ohara O."/>
            <person name="Isogai T."/>
            <person name="Sugano S."/>
        </authorList>
    </citation>
    <scope>NUCLEOTIDE SEQUENCE [LARGE SCALE MRNA] (ISOFORMS 1 AND 2)</scope>
    <source>
        <tissue>Retinoblastoma</tissue>
        <tissue>Thymus</tissue>
    </source>
</reference>
<reference key="3">
    <citation type="journal article" date="2004" name="Nature">
        <title>The DNA sequence and biology of human chromosome 19.</title>
        <authorList>
            <person name="Grimwood J."/>
            <person name="Gordon L.A."/>
            <person name="Olsen A.S."/>
            <person name="Terry A."/>
            <person name="Schmutz J."/>
            <person name="Lamerdin J.E."/>
            <person name="Hellsten U."/>
            <person name="Goodstein D."/>
            <person name="Couronne O."/>
            <person name="Tran-Gyamfi M."/>
            <person name="Aerts A."/>
            <person name="Altherr M."/>
            <person name="Ashworth L."/>
            <person name="Bajorek E."/>
            <person name="Black S."/>
            <person name="Branscomb E."/>
            <person name="Caenepeel S."/>
            <person name="Carrano A.V."/>
            <person name="Caoile C."/>
            <person name="Chan Y.M."/>
            <person name="Christensen M."/>
            <person name="Cleland C.A."/>
            <person name="Copeland A."/>
            <person name="Dalin E."/>
            <person name="Dehal P."/>
            <person name="Denys M."/>
            <person name="Detter J.C."/>
            <person name="Escobar J."/>
            <person name="Flowers D."/>
            <person name="Fotopulos D."/>
            <person name="Garcia C."/>
            <person name="Georgescu A.M."/>
            <person name="Glavina T."/>
            <person name="Gomez M."/>
            <person name="Gonzales E."/>
            <person name="Groza M."/>
            <person name="Hammon N."/>
            <person name="Hawkins T."/>
            <person name="Haydu L."/>
            <person name="Ho I."/>
            <person name="Huang W."/>
            <person name="Israni S."/>
            <person name="Jett J."/>
            <person name="Kadner K."/>
            <person name="Kimball H."/>
            <person name="Kobayashi A."/>
            <person name="Larionov V."/>
            <person name="Leem S.-H."/>
            <person name="Lopez F."/>
            <person name="Lou Y."/>
            <person name="Lowry S."/>
            <person name="Malfatti S."/>
            <person name="Martinez D."/>
            <person name="McCready P.M."/>
            <person name="Medina C."/>
            <person name="Morgan J."/>
            <person name="Nelson K."/>
            <person name="Nolan M."/>
            <person name="Ovcharenko I."/>
            <person name="Pitluck S."/>
            <person name="Pollard M."/>
            <person name="Popkie A.P."/>
            <person name="Predki P."/>
            <person name="Quan G."/>
            <person name="Ramirez L."/>
            <person name="Rash S."/>
            <person name="Retterer J."/>
            <person name="Rodriguez A."/>
            <person name="Rogers S."/>
            <person name="Salamov A."/>
            <person name="Salazar A."/>
            <person name="She X."/>
            <person name="Smith D."/>
            <person name="Slezak T."/>
            <person name="Solovyev V."/>
            <person name="Thayer N."/>
            <person name="Tice H."/>
            <person name="Tsai M."/>
            <person name="Ustaszewska A."/>
            <person name="Vo N."/>
            <person name="Wagner M."/>
            <person name="Wheeler J."/>
            <person name="Wu K."/>
            <person name="Xie G."/>
            <person name="Yang J."/>
            <person name="Dubchak I."/>
            <person name="Furey T.S."/>
            <person name="DeJong P."/>
            <person name="Dickson M."/>
            <person name="Gordon D."/>
            <person name="Eichler E.E."/>
            <person name="Pennacchio L.A."/>
            <person name="Richardson P."/>
            <person name="Stubbs L."/>
            <person name="Rokhsar D.S."/>
            <person name="Myers R.M."/>
            <person name="Rubin E.M."/>
            <person name="Lucas S.M."/>
        </authorList>
    </citation>
    <scope>NUCLEOTIDE SEQUENCE [LARGE SCALE GENOMIC DNA]</scope>
</reference>
<reference key="4">
    <citation type="journal article" date="2004" name="Genome Res.">
        <title>The status, quality, and expansion of the NIH full-length cDNA project: the Mammalian Gene Collection (MGC).</title>
        <authorList>
            <consortium name="The MGC Project Team"/>
        </authorList>
    </citation>
    <scope>NUCLEOTIDE SEQUENCE [LARGE SCALE MRNA] (ISOFORM 1)</scope>
</reference>
<reference key="5">
    <citation type="journal article" date="2005" name="Curr. Biol.">
        <title>Polo-like kinase 1 creates the tension-sensing 3F3/2 phosphoepitope and modulates the association of spindle-checkpoint proteins at kinetochores.</title>
        <authorList>
            <person name="Ahonen L.J."/>
            <person name="Kallio M.J."/>
            <person name="Daum J.R."/>
            <person name="Bolton M."/>
            <person name="Manke I.A."/>
            <person name="Yaffe M.B."/>
            <person name="Stukenberg P.T."/>
            <person name="Gorbsky G.J."/>
        </authorList>
    </citation>
    <scope>SUBCELLULAR LOCATION</scope>
</reference>
<reference key="6">
    <citation type="journal article" date="2004" name="J. Biol. Chem.">
        <title>Identification of two novel components of the human NDC80 kinetochore complex.</title>
        <authorList>
            <person name="Bharadwaj R."/>
            <person name="Qi W."/>
            <person name="Yu H."/>
        </authorList>
    </citation>
    <scope>IDENTIFICATION BY MASS SPECTROMETRY</scope>
    <scope>IDENTIFICATION IN THE NDC80 COMPLEX</scope>
</reference>
<reference key="7">
    <citation type="journal article" date="2005" name="J. Biol. Chem.">
        <title>Architecture of the human Ndc80-Hec1 complex, a critical constituent of the outer kinetochore.</title>
        <authorList>
            <person name="Ciferri C."/>
            <person name="De Luca J."/>
            <person name="Monzani S."/>
            <person name="Ferrari K.J."/>
            <person name="Ristic D."/>
            <person name="Wyman C."/>
            <person name="Stark H."/>
            <person name="Kilmartin J."/>
            <person name="Salmon E.D."/>
            <person name="Musacchio A."/>
        </authorList>
    </citation>
    <scope>CHARACTERIZATION OF THE NDC80 COMPLEX</scope>
    <scope>SUBCELLULAR LOCATION</scope>
</reference>
<reference key="8">
    <citation type="journal article" date="2005" name="Mol. Cell. Proteomics">
        <title>Proteome analysis of the human mitotic spindle.</title>
        <authorList>
            <person name="Sauer G."/>
            <person name="Koerner R."/>
            <person name="Hanisch A."/>
            <person name="Ries A."/>
            <person name="Nigg E.A."/>
            <person name="Sillje H.H.W."/>
        </authorList>
    </citation>
    <scope>SUBCELLULAR LOCATION</scope>
    <scope>IDENTIFICATION BY MASS SPECTROMETRY</scope>
</reference>
<reference key="9">
    <citation type="journal article" date="2009" name="Sci. Signal.">
        <title>Quantitative phosphoproteomic analysis of T cell receptor signaling reveals system-wide modulation of protein-protein interactions.</title>
        <authorList>
            <person name="Mayya V."/>
            <person name="Lundgren D.H."/>
            <person name="Hwang S.-I."/>
            <person name="Rezaul K."/>
            <person name="Wu L."/>
            <person name="Eng J.K."/>
            <person name="Rodionov V."/>
            <person name="Han D.K."/>
        </authorList>
    </citation>
    <scope>PHOSPHORYLATION [LARGE SCALE ANALYSIS] AT SER-11</scope>
    <scope>IDENTIFICATION BY MASS SPECTROMETRY [LARGE SCALE ANALYSIS]</scope>
    <source>
        <tissue>Leukemic T-cell</tissue>
    </source>
</reference>
<reference key="10">
    <citation type="journal article" date="2011" name="BMC Syst. Biol.">
        <title>Initial characterization of the human central proteome.</title>
        <authorList>
            <person name="Burkard T.R."/>
            <person name="Planyavsky M."/>
            <person name="Kaupe I."/>
            <person name="Breitwieser F.P."/>
            <person name="Buerckstuemmer T."/>
            <person name="Bennett K.L."/>
            <person name="Superti-Furga G."/>
            <person name="Colinge J."/>
        </authorList>
    </citation>
    <scope>IDENTIFICATION BY MASS SPECTROMETRY [LARGE SCALE ANALYSIS]</scope>
</reference>
<reference key="11">
    <citation type="journal article" date="2012" name="Dev. Cell">
        <title>The kinetochore-bound Ska1 complex tracks depolymerizing microtubules and binds to curved protofilaments.</title>
        <authorList>
            <person name="Schmidt J.C."/>
            <person name="Arthanari H."/>
            <person name="Boeszoermenyi A."/>
            <person name="Dashkevich N.M."/>
            <person name="Wilson-Kubalek E.M."/>
            <person name="Monnier N."/>
            <person name="Markus M."/>
            <person name="Oberer M."/>
            <person name="Milligan R.A."/>
            <person name="Bathe M."/>
            <person name="Wagner G."/>
            <person name="Grishchuk E.L."/>
            <person name="Cheeseman I.M."/>
        </authorList>
    </citation>
    <scope>FUNCTION</scope>
</reference>
<reference key="12">
    <citation type="journal article" date="2013" name="J. Proteome Res.">
        <title>Toward a comprehensive characterization of a human cancer cell phosphoproteome.</title>
        <authorList>
            <person name="Zhou H."/>
            <person name="Di Palma S."/>
            <person name="Preisinger C."/>
            <person name="Peng M."/>
            <person name="Polat A.N."/>
            <person name="Heck A.J."/>
            <person name="Mohammed S."/>
        </authorList>
    </citation>
    <scope>PHOSPHORYLATION [LARGE SCALE ANALYSIS] AT SER-11</scope>
    <scope>IDENTIFICATION BY MASS SPECTROMETRY [LARGE SCALE ANALYSIS]</scope>
    <source>
        <tissue>Erythroleukemia</tissue>
    </source>
</reference>
<reference key="13">
    <citation type="journal article" date="2015" name="Proteomics">
        <title>N-terminome analysis of the human mitochondrial proteome.</title>
        <authorList>
            <person name="Vaca Jacome A.S."/>
            <person name="Rabilloud T."/>
            <person name="Schaeffer-Reiss C."/>
            <person name="Rompais M."/>
            <person name="Ayoub D."/>
            <person name="Lane L."/>
            <person name="Bairoch A."/>
            <person name="Van Dorsselaer A."/>
            <person name="Carapito C."/>
        </authorList>
    </citation>
    <scope>IDENTIFICATION BY MASS SPECTROMETRY [LARGE SCALE ANALYSIS]</scope>
</reference>
<gene>
    <name type="primary">SPC24</name>
    <name type="synonym">SPBC24</name>
</gene>
<keyword id="KW-0002">3D-structure</keyword>
<keyword id="KW-0025">Alternative splicing</keyword>
<keyword id="KW-0131">Cell cycle</keyword>
<keyword id="KW-0132">Cell division</keyword>
<keyword id="KW-0137">Centromere</keyword>
<keyword id="KW-0158">Chromosome</keyword>
<keyword id="KW-0175">Coiled coil</keyword>
<keyword id="KW-0995">Kinetochore</keyword>
<keyword id="KW-0498">Mitosis</keyword>
<keyword id="KW-0539">Nucleus</keyword>
<keyword id="KW-0597">Phosphoprotein</keyword>
<keyword id="KW-1267">Proteomics identification</keyword>
<keyword id="KW-1185">Reference proteome</keyword>
<accession>Q8NBT2</accession>
<accession>B4DZZ7</accession>
<accession>C9JGC4</accession>
<sequence>MAAFRDIEEVSQGLLSLLGANRAEAQQRRLLGRHEQVVERLLETQDGAEKQLREILTMEKEVAQSLLNAKEQVHQGGVELQQLEAGLQEAGEEDTRLKASLLQLTRELEELKEIEADLERQEKEVDEDTTVTIPSAVYVAQLYHQVSKIEWDYECEPGMVKGIHHGPSVAQPIHLDSTQLSRKFISDYLWSLVDTEW</sequence>
<feature type="chain" id="PRO_0000249559" description="Kinetochore protein Spc24">
    <location>
        <begin position="1"/>
        <end position="197"/>
    </location>
</feature>
<feature type="region of interest" description="Interaction with the N-terminus of SPBC25">
    <location>
        <begin position="1"/>
        <end position="131"/>
    </location>
</feature>
<feature type="region of interest" description="Interaction with the NDC80-CDCA1 subcomplex">
    <location>
        <begin position="1"/>
        <end position="69"/>
    </location>
</feature>
<feature type="region of interest" description="Interaction with the C-terminus of SPBC25">
    <location>
        <begin position="132"/>
        <end position="197"/>
    </location>
</feature>
<feature type="coiled-coil region" evidence="1">
    <location>
        <begin position="33"/>
        <end position="131"/>
    </location>
</feature>
<feature type="modified residue" description="Phosphoserine" evidence="10 11">
    <location>
        <position position="11"/>
    </location>
</feature>
<feature type="splice variant" id="VSP_054243" description="In isoform 2." evidence="8">
    <location>
        <begin position="72"/>
        <end position="117"/>
    </location>
</feature>
<feature type="helix" evidence="12">
    <location>
        <begin position="127"/>
        <end position="131"/>
    </location>
</feature>
<feature type="turn" evidence="12">
    <location>
        <begin position="134"/>
        <end position="136"/>
    </location>
</feature>
<feature type="helix" evidence="12">
    <location>
        <begin position="137"/>
        <end position="147"/>
    </location>
</feature>
<feature type="strand" evidence="13">
    <location>
        <begin position="149"/>
        <end position="151"/>
    </location>
</feature>
<feature type="turn" evidence="12">
    <location>
        <begin position="156"/>
        <end position="158"/>
    </location>
</feature>
<feature type="strand" evidence="12">
    <location>
        <begin position="160"/>
        <end position="163"/>
    </location>
</feature>
<feature type="strand" evidence="13">
    <location>
        <begin position="166"/>
        <end position="169"/>
    </location>
</feature>
<feature type="strand" evidence="12">
    <location>
        <begin position="172"/>
        <end position="175"/>
    </location>
</feature>
<feature type="turn" evidence="13">
    <location>
        <begin position="177"/>
        <end position="179"/>
    </location>
</feature>
<feature type="helix" evidence="12">
    <location>
        <begin position="182"/>
        <end position="190"/>
    </location>
</feature>
<organism>
    <name type="scientific">Homo sapiens</name>
    <name type="common">Human</name>
    <dbReference type="NCBI Taxonomy" id="9606"/>
    <lineage>
        <taxon>Eukaryota</taxon>
        <taxon>Metazoa</taxon>
        <taxon>Chordata</taxon>
        <taxon>Craniata</taxon>
        <taxon>Vertebrata</taxon>
        <taxon>Euteleostomi</taxon>
        <taxon>Mammalia</taxon>
        <taxon>Eutheria</taxon>
        <taxon>Euarchontoglires</taxon>
        <taxon>Primates</taxon>
        <taxon>Haplorrhini</taxon>
        <taxon>Catarrhini</taxon>
        <taxon>Hominidae</taxon>
        <taxon>Homo</taxon>
    </lineage>
</organism>
<dbReference type="EMBL" id="AY456387">
    <property type="protein sequence ID" value="AAR88651.1"/>
    <property type="molecule type" value="mRNA"/>
</dbReference>
<dbReference type="EMBL" id="AK075287">
    <property type="protein sequence ID" value="BAC11523.1"/>
    <property type="molecule type" value="mRNA"/>
</dbReference>
<dbReference type="EMBL" id="AK303157">
    <property type="protein sequence ID" value="BAG64259.1"/>
    <property type="molecule type" value="mRNA"/>
</dbReference>
<dbReference type="EMBL" id="AC011485">
    <property type="status" value="NOT_ANNOTATED_CDS"/>
    <property type="molecule type" value="Genomic_DNA"/>
</dbReference>
<dbReference type="EMBL" id="BC105037">
    <property type="protein sequence ID" value="AAI05038.1"/>
    <property type="molecule type" value="mRNA"/>
</dbReference>
<dbReference type="EMBL" id="BC105039">
    <property type="protein sequence ID" value="AAI05040.1"/>
    <property type="molecule type" value="mRNA"/>
</dbReference>
<dbReference type="CCDS" id="CCDS45974.1">
    <molecule id="Q8NBT2-1"/>
</dbReference>
<dbReference type="RefSeq" id="NP_001303960.1">
    <property type="nucleotide sequence ID" value="NM_001317031.1"/>
</dbReference>
<dbReference type="RefSeq" id="NP_001303962.1">
    <property type="nucleotide sequence ID" value="NM_001317033.1"/>
</dbReference>
<dbReference type="RefSeq" id="NP_872319.1">
    <molecule id="Q8NBT2-1"/>
    <property type="nucleotide sequence ID" value="NM_182513.4"/>
</dbReference>
<dbReference type="RefSeq" id="XP_005259810.1">
    <molecule id="Q8NBT2-2"/>
    <property type="nucleotide sequence ID" value="XM_005259753.4"/>
</dbReference>
<dbReference type="RefSeq" id="XP_054175862.1">
    <molecule id="Q8NBT2-2"/>
    <property type="nucleotide sequence ID" value="XM_054319887.1"/>
</dbReference>
<dbReference type="PDB" id="2VE7">
    <property type="method" value="X-ray"/>
    <property type="resolution" value="2.88 A"/>
    <property type="chains" value="C/D=122-197"/>
</dbReference>
<dbReference type="PDB" id="3IZ0">
    <property type="method" value="EM"/>
    <property type="resolution" value="8.60 A"/>
    <property type="chains" value="D/F=122-197"/>
</dbReference>
<dbReference type="PDB" id="8PPR">
    <property type="method" value="EM"/>
    <property type="resolution" value="3.00 A"/>
    <property type="chains" value="F=1-197"/>
</dbReference>
<dbReference type="PDB" id="8Q5H">
    <property type="method" value="EM"/>
    <property type="resolution" value="4.50 A"/>
    <property type="chains" value="4=110-197"/>
</dbReference>
<dbReference type="PDBsum" id="2VE7"/>
<dbReference type="PDBsum" id="3IZ0"/>
<dbReference type="PDBsum" id="8PPR"/>
<dbReference type="PDBsum" id="8Q5H"/>
<dbReference type="EMDB" id="EMD-17814"/>
<dbReference type="EMDB" id="EMD-18179"/>
<dbReference type="EMDB" id="EMD-2549"/>
<dbReference type="SMR" id="Q8NBT2"/>
<dbReference type="BioGRID" id="127093">
    <property type="interactions" value="87"/>
</dbReference>
<dbReference type="ComplexPortal" id="CPX-550">
    <property type="entry name" value="Ndc80 complex"/>
</dbReference>
<dbReference type="CORUM" id="Q8NBT2"/>
<dbReference type="DIP" id="DIP-35754N"/>
<dbReference type="FunCoup" id="Q8NBT2">
    <property type="interactions" value="1174"/>
</dbReference>
<dbReference type="IntAct" id="Q8NBT2">
    <property type="interactions" value="57"/>
</dbReference>
<dbReference type="MINT" id="Q8NBT2"/>
<dbReference type="STRING" id="9606.ENSP00000465075"/>
<dbReference type="iPTMnet" id="Q8NBT2"/>
<dbReference type="PhosphoSitePlus" id="Q8NBT2"/>
<dbReference type="BioMuta" id="SPC24"/>
<dbReference type="DMDM" id="391358156"/>
<dbReference type="jPOST" id="Q8NBT2"/>
<dbReference type="MassIVE" id="Q8NBT2"/>
<dbReference type="PaxDb" id="9606-ENSP00000465075"/>
<dbReference type="PeptideAtlas" id="Q8NBT2"/>
<dbReference type="ProteomicsDB" id="72820">
    <molecule id="Q8NBT2-1"/>
</dbReference>
<dbReference type="Pumba" id="Q8NBT2"/>
<dbReference type="TopDownProteomics" id="Q8NBT2-1">
    <molecule id="Q8NBT2-1"/>
</dbReference>
<dbReference type="Antibodypedia" id="53808">
    <property type="antibodies" value="75 antibodies from 19 providers"/>
</dbReference>
<dbReference type="DNASU" id="147841"/>
<dbReference type="Ensembl" id="ENST00000592540.6">
    <molecule id="Q8NBT2-1"/>
    <property type="protein sequence ID" value="ENSP00000465075.1"/>
    <property type="gene ID" value="ENSG00000161888.12"/>
</dbReference>
<dbReference type="GeneID" id="147841"/>
<dbReference type="KEGG" id="hsa:147841"/>
<dbReference type="MANE-Select" id="ENST00000592540.6">
    <property type="protein sequence ID" value="ENSP00000465075.1"/>
    <property type="RefSeq nucleotide sequence ID" value="NM_182513.4"/>
    <property type="RefSeq protein sequence ID" value="NP_872319.1"/>
</dbReference>
<dbReference type="UCSC" id="uc002mql.3">
    <molecule id="Q8NBT2-1"/>
    <property type="organism name" value="human"/>
</dbReference>
<dbReference type="AGR" id="HGNC:26913"/>
<dbReference type="CTD" id="147841"/>
<dbReference type="DisGeNET" id="147841"/>
<dbReference type="GeneCards" id="SPC24"/>
<dbReference type="HGNC" id="HGNC:26913">
    <property type="gene designation" value="SPC24"/>
</dbReference>
<dbReference type="HPA" id="ENSG00000161888">
    <property type="expression patterns" value="Tissue enhanced (bone marrow, lymphoid tissue)"/>
</dbReference>
<dbReference type="MIM" id="609394">
    <property type="type" value="gene"/>
</dbReference>
<dbReference type="neXtProt" id="NX_Q8NBT2"/>
<dbReference type="OpenTargets" id="ENSG00000161888"/>
<dbReference type="PharmGKB" id="PA162404412"/>
<dbReference type="VEuPathDB" id="HostDB:ENSG00000161888"/>
<dbReference type="eggNOG" id="ENOG502S26V">
    <property type="taxonomic scope" value="Eukaryota"/>
</dbReference>
<dbReference type="GeneTree" id="ENSGT00390000005584"/>
<dbReference type="HOGENOM" id="CLU_119584_0_0_1"/>
<dbReference type="InParanoid" id="Q8NBT2"/>
<dbReference type="OMA" id="SEENACQ"/>
<dbReference type="OrthoDB" id="6432863at2759"/>
<dbReference type="PAN-GO" id="Q8NBT2">
    <property type="GO annotations" value="3 GO annotations based on evolutionary models"/>
</dbReference>
<dbReference type="PathwayCommons" id="Q8NBT2"/>
<dbReference type="Reactome" id="R-HSA-141444">
    <property type="pathway name" value="Amplification of signal from unattached kinetochores via a MAD2 inhibitory signal"/>
</dbReference>
<dbReference type="Reactome" id="R-HSA-2467813">
    <property type="pathway name" value="Separation of Sister Chromatids"/>
</dbReference>
<dbReference type="Reactome" id="R-HSA-2500257">
    <property type="pathway name" value="Resolution of Sister Chromatid Cohesion"/>
</dbReference>
<dbReference type="Reactome" id="R-HSA-5663220">
    <property type="pathway name" value="RHO GTPases Activate Formins"/>
</dbReference>
<dbReference type="Reactome" id="R-HSA-68877">
    <property type="pathway name" value="Mitotic Prometaphase"/>
</dbReference>
<dbReference type="Reactome" id="R-HSA-9648025">
    <property type="pathway name" value="EML4 and NUDC in mitotic spindle formation"/>
</dbReference>
<dbReference type="SignaLink" id="Q8NBT2"/>
<dbReference type="SIGNOR" id="Q8NBT2"/>
<dbReference type="BioGRID-ORCS" id="147841">
    <property type="hits" value="846 hits in 1171 CRISPR screens"/>
</dbReference>
<dbReference type="ChiTaRS" id="SPC24">
    <property type="organism name" value="human"/>
</dbReference>
<dbReference type="EvolutionaryTrace" id="Q8NBT2"/>
<dbReference type="GeneWiki" id="SPC24"/>
<dbReference type="GenomeRNAi" id="147841"/>
<dbReference type="Pharos" id="Q8NBT2">
    <property type="development level" value="Tbio"/>
</dbReference>
<dbReference type="PRO" id="PR:Q8NBT2"/>
<dbReference type="Proteomes" id="UP000005640">
    <property type="component" value="Chromosome 19"/>
</dbReference>
<dbReference type="RNAct" id="Q8NBT2">
    <property type="molecule type" value="protein"/>
</dbReference>
<dbReference type="Bgee" id="ENSG00000161888">
    <property type="expression patterns" value="Expressed in ventricular zone and 112 other cell types or tissues"/>
</dbReference>
<dbReference type="ExpressionAtlas" id="Q8NBT2">
    <property type="expression patterns" value="baseline and differential"/>
</dbReference>
<dbReference type="GO" id="GO:0005829">
    <property type="term" value="C:cytosol"/>
    <property type="evidence" value="ECO:0000304"/>
    <property type="project" value="Reactome"/>
</dbReference>
<dbReference type="GO" id="GO:0000776">
    <property type="term" value="C:kinetochore"/>
    <property type="evidence" value="ECO:0000314"/>
    <property type="project" value="ComplexPortal"/>
</dbReference>
<dbReference type="GO" id="GO:0031262">
    <property type="term" value="C:Ndc80 complex"/>
    <property type="evidence" value="ECO:0000314"/>
    <property type="project" value="UniProtKB"/>
</dbReference>
<dbReference type="GO" id="GO:0005730">
    <property type="term" value="C:nucleolus"/>
    <property type="evidence" value="ECO:0000314"/>
    <property type="project" value="HPA"/>
</dbReference>
<dbReference type="GO" id="GO:0005654">
    <property type="term" value="C:nucleoplasm"/>
    <property type="evidence" value="ECO:0000314"/>
    <property type="project" value="HPA"/>
</dbReference>
<dbReference type="GO" id="GO:0000940">
    <property type="term" value="C:outer kinetochore"/>
    <property type="evidence" value="ECO:0000314"/>
    <property type="project" value="UniProtKB"/>
</dbReference>
<dbReference type="GO" id="GO:0008608">
    <property type="term" value="P:attachment of spindle microtubules to kinetochore"/>
    <property type="evidence" value="ECO:0000314"/>
    <property type="project" value="ComplexPortal"/>
</dbReference>
<dbReference type="GO" id="GO:0051301">
    <property type="term" value="P:cell division"/>
    <property type="evidence" value="ECO:0007669"/>
    <property type="project" value="UniProtKB-KW"/>
</dbReference>
<dbReference type="GO" id="GO:0007059">
    <property type="term" value="P:chromosome segregation"/>
    <property type="evidence" value="ECO:0000318"/>
    <property type="project" value="GO_Central"/>
</dbReference>
<dbReference type="GO" id="GO:0007094">
    <property type="term" value="P:mitotic spindle assembly checkpoint signaling"/>
    <property type="evidence" value="ECO:0000303"/>
    <property type="project" value="ComplexPortal"/>
</dbReference>
<dbReference type="CDD" id="cd11565">
    <property type="entry name" value="RWD_Spc24"/>
    <property type="match status" value="1"/>
</dbReference>
<dbReference type="FunFam" id="3.30.160.570:FF:000001">
    <property type="entry name" value="SPC24, NDC80 kinetochore complex component"/>
    <property type="match status" value="1"/>
</dbReference>
<dbReference type="Gene3D" id="3.30.160.570">
    <property type="entry name" value="Ncd80 complex, Spc24 subunit"/>
    <property type="match status" value="1"/>
</dbReference>
<dbReference type="IDEAL" id="IID00388"/>
<dbReference type="InterPro" id="IPR013252">
    <property type="entry name" value="Ndc80_Spc24"/>
</dbReference>
<dbReference type="PANTHER" id="PTHR22142">
    <property type="match status" value="1"/>
</dbReference>
<dbReference type="PANTHER" id="PTHR22142:SF2">
    <property type="entry name" value="KINETOCHORE PROTEIN SPC24"/>
    <property type="match status" value="1"/>
</dbReference>
<dbReference type="Pfam" id="PF08286">
    <property type="entry name" value="Spc24"/>
    <property type="match status" value="1"/>
</dbReference>
<evidence type="ECO:0000255" key="1"/>
<evidence type="ECO:0000269" key="2">
    <source>
    </source>
</evidence>
<evidence type="ECO:0000269" key="3">
    <source>
    </source>
</evidence>
<evidence type="ECO:0000269" key="4">
    <source>
    </source>
</evidence>
<evidence type="ECO:0000269" key="5">
    <source>
    </source>
</evidence>
<evidence type="ECO:0000269" key="6">
    <source>
    </source>
</evidence>
<evidence type="ECO:0000269" key="7">
    <source>
    </source>
</evidence>
<evidence type="ECO:0000303" key="8">
    <source>
    </source>
</evidence>
<evidence type="ECO:0000305" key="9"/>
<evidence type="ECO:0007744" key="10">
    <source>
    </source>
</evidence>
<evidence type="ECO:0007744" key="11">
    <source>
    </source>
</evidence>
<evidence type="ECO:0007829" key="12">
    <source>
        <dbReference type="PDB" id="2VE7"/>
    </source>
</evidence>
<evidence type="ECO:0007829" key="13">
    <source>
        <dbReference type="PDB" id="8PPR"/>
    </source>
</evidence>